<dbReference type="EC" id="2.7.7.23" evidence="1"/>
<dbReference type="EC" id="2.3.1.157" evidence="1"/>
<dbReference type="EMBL" id="CP000713">
    <property type="protein sequence ID" value="ABQ95221.1"/>
    <property type="molecule type" value="Genomic_DNA"/>
</dbReference>
<dbReference type="SMR" id="A5WHT0"/>
<dbReference type="STRING" id="349106.PsycPRwf_2281"/>
<dbReference type="KEGG" id="prw:PsycPRwf_2281"/>
<dbReference type="eggNOG" id="COG1207">
    <property type="taxonomic scope" value="Bacteria"/>
</dbReference>
<dbReference type="HOGENOM" id="CLU_029499_15_2_6"/>
<dbReference type="UniPathway" id="UPA00113">
    <property type="reaction ID" value="UER00532"/>
</dbReference>
<dbReference type="UniPathway" id="UPA00113">
    <property type="reaction ID" value="UER00533"/>
</dbReference>
<dbReference type="UniPathway" id="UPA00973"/>
<dbReference type="GO" id="GO:0005737">
    <property type="term" value="C:cytoplasm"/>
    <property type="evidence" value="ECO:0007669"/>
    <property type="project" value="UniProtKB-SubCell"/>
</dbReference>
<dbReference type="GO" id="GO:0016020">
    <property type="term" value="C:membrane"/>
    <property type="evidence" value="ECO:0007669"/>
    <property type="project" value="GOC"/>
</dbReference>
<dbReference type="GO" id="GO:0019134">
    <property type="term" value="F:glucosamine-1-phosphate N-acetyltransferase activity"/>
    <property type="evidence" value="ECO:0007669"/>
    <property type="project" value="UniProtKB-UniRule"/>
</dbReference>
<dbReference type="GO" id="GO:0000287">
    <property type="term" value="F:magnesium ion binding"/>
    <property type="evidence" value="ECO:0007669"/>
    <property type="project" value="UniProtKB-UniRule"/>
</dbReference>
<dbReference type="GO" id="GO:0003977">
    <property type="term" value="F:UDP-N-acetylglucosamine diphosphorylase activity"/>
    <property type="evidence" value="ECO:0007669"/>
    <property type="project" value="UniProtKB-UniRule"/>
</dbReference>
<dbReference type="GO" id="GO:0000902">
    <property type="term" value="P:cell morphogenesis"/>
    <property type="evidence" value="ECO:0007669"/>
    <property type="project" value="UniProtKB-UniRule"/>
</dbReference>
<dbReference type="GO" id="GO:0071555">
    <property type="term" value="P:cell wall organization"/>
    <property type="evidence" value="ECO:0007669"/>
    <property type="project" value="UniProtKB-KW"/>
</dbReference>
<dbReference type="GO" id="GO:0009245">
    <property type="term" value="P:lipid A biosynthetic process"/>
    <property type="evidence" value="ECO:0007669"/>
    <property type="project" value="UniProtKB-UniRule"/>
</dbReference>
<dbReference type="GO" id="GO:0009252">
    <property type="term" value="P:peptidoglycan biosynthetic process"/>
    <property type="evidence" value="ECO:0007669"/>
    <property type="project" value="UniProtKB-UniRule"/>
</dbReference>
<dbReference type="GO" id="GO:0008360">
    <property type="term" value="P:regulation of cell shape"/>
    <property type="evidence" value="ECO:0007669"/>
    <property type="project" value="UniProtKB-KW"/>
</dbReference>
<dbReference type="GO" id="GO:0006048">
    <property type="term" value="P:UDP-N-acetylglucosamine biosynthetic process"/>
    <property type="evidence" value="ECO:0007669"/>
    <property type="project" value="UniProtKB-UniPathway"/>
</dbReference>
<dbReference type="CDD" id="cd02540">
    <property type="entry name" value="GT2_GlmU_N_bac"/>
    <property type="match status" value="1"/>
</dbReference>
<dbReference type="CDD" id="cd03353">
    <property type="entry name" value="LbH_GlmU_C"/>
    <property type="match status" value="1"/>
</dbReference>
<dbReference type="Gene3D" id="2.160.10.10">
    <property type="entry name" value="Hexapeptide repeat proteins"/>
    <property type="match status" value="1"/>
</dbReference>
<dbReference type="Gene3D" id="3.90.550.10">
    <property type="entry name" value="Spore Coat Polysaccharide Biosynthesis Protein SpsA, Chain A"/>
    <property type="match status" value="1"/>
</dbReference>
<dbReference type="HAMAP" id="MF_01631">
    <property type="entry name" value="GlmU"/>
    <property type="match status" value="1"/>
</dbReference>
<dbReference type="InterPro" id="IPR005882">
    <property type="entry name" value="Bifunctional_GlmU"/>
</dbReference>
<dbReference type="InterPro" id="IPR050065">
    <property type="entry name" value="GlmU-like"/>
</dbReference>
<dbReference type="InterPro" id="IPR038009">
    <property type="entry name" value="GlmU_C_LbH"/>
</dbReference>
<dbReference type="InterPro" id="IPR001451">
    <property type="entry name" value="Hexapep"/>
</dbReference>
<dbReference type="InterPro" id="IPR018357">
    <property type="entry name" value="Hexapep_transf_CS"/>
</dbReference>
<dbReference type="InterPro" id="IPR025877">
    <property type="entry name" value="MobA-like_NTP_Trfase"/>
</dbReference>
<dbReference type="InterPro" id="IPR029044">
    <property type="entry name" value="Nucleotide-diphossugar_trans"/>
</dbReference>
<dbReference type="InterPro" id="IPR011004">
    <property type="entry name" value="Trimer_LpxA-like_sf"/>
</dbReference>
<dbReference type="NCBIfam" id="TIGR01173">
    <property type="entry name" value="glmU"/>
    <property type="match status" value="1"/>
</dbReference>
<dbReference type="PANTHER" id="PTHR43584:SF3">
    <property type="entry name" value="BIFUNCTIONAL PROTEIN GLMU"/>
    <property type="match status" value="1"/>
</dbReference>
<dbReference type="PANTHER" id="PTHR43584">
    <property type="entry name" value="NUCLEOTIDYL TRANSFERASE"/>
    <property type="match status" value="1"/>
</dbReference>
<dbReference type="Pfam" id="PF00132">
    <property type="entry name" value="Hexapep"/>
    <property type="match status" value="2"/>
</dbReference>
<dbReference type="Pfam" id="PF12804">
    <property type="entry name" value="NTP_transf_3"/>
    <property type="match status" value="1"/>
</dbReference>
<dbReference type="SUPFAM" id="SSF53448">
    <property type="entry name" value="Nucleotide-diphospho-sugar transferases"/>
    <property type="match status" value="1"/>
</dbReference>
<dbReference type="SUPFAM" id="SSF51161">
    <property type="entry name" value="Trimeric LpxA-like enzymes"/>
    <property type="match status" value="1"/>
</dbReference>
<dbReference type="PROSITE" id="PS00101">
    <property type="entry name" value="HEXAPEP_TRANSFERASES"/>
    <property type="match status" value="1"/>
</dbReference>
<name>GLMU_PSYWF</name>
<proteinExistence type="inferred from homology"/>
<keyword id="KW-0012">Acyltransferase</keyword>
<keyword id="KW-0133">Cell shape</keyword>
<keyword id="KW-0961">Cell wall biogenesis/degradation</keyword>
<keyword id="KW-0963">Cytoplasm</keyword>
<keyword id="KW-0460">Magnesium</keyword>
<keyword id="KW-0479">Metal-binding</keyword>
<keyword id="KW-0511">Multifunctional enzyme</keyword>
<keyword id="KW-0548">Nucleotidyltransferase</keyword>
<keyword id="KW-0573">Peptidoglycan synthesis</keyword>
<keyword id="KW-0677">Repeat</keyword>
<keyword id="KW-0808">Transferase</keyword>
<reference key="1">
    <citation type="submission" date="2007-05" db="EMBL/GenBank/DDBJ databases">
        <title>Complete sequence of chromosome of Psychrobacter sp. PRwf-1.</title>
        <authorList>
            <consortium name="US DOE Joint Genome Institute"/>
            <person name="Copeland A."/>
            <person name="Lucas S."/>
            <person name="Lapidus A."/>
            <person name="Barry K."/>
            <person name="Detter J.C."/>
            <person name="Glavina del Rio T."/>
            <person name="Hammon N."/>
            <person name="Israni S."/>
            <person name="Dalin E."/>
            <person name="Tice H."/>
            <person name="Pitluck S."/>
            <person name="Chain P."/>
            <person name="Malfatti S."/>
            <person name="Shin M."/>
            <person name="Vergez L."/>
            <person name="Schmutz J."/>
            <person name="Larimer F."/>
            <person name="Land M."/>
            <person name="Hauser L."/>
            <person name="Kyrpides N."/>
            <person name="Kim E."/>
            <person name="Tiedje J."/>
            <person name="Richardson P."/>
        </authorList>
    </citation>
    <scope>NUCLEOTIDE SEQUENCE [LARGE SCALE GENOMIC DNA]</scope>
    <source>
        <strain>PRwf-1</strain>
    </source>
</reference>
<feature type="chain" id="PRO_1000073649" description="Bifunctional protein GlmU">
    <location>
        <begin position="1"/>
        <end position="455"/>
    </location>
</feature>
<feature type="region of interest" description="Pyrophosphorylase" evidence="1">
    <location>
        <begin position="1"/>
        <end position="228"/>
    </location>
</feature>
<feature type="region of interest" description="Linker" evidence="1">
    <location>
        <begin position="229"/>
        <end position="249"/>
    </location>
</feature>
<feature type="region of interest" description="N-acetyltransferase" evidence="1">
    <location>
        <begin position="250"/>
        <end position="455"/>
    </location>
</feature>
<feature type="active site" description="Proton acceptor" evidence="1">
    <location>
        <position position="362"/>
    </location>
</feature>
<feature type="binding site" evidence="1">
    <location>
        <begin position="10"/>
        <end position="13"/>
    </location>
    <ligand>
        <name>UDP-N-acetyl-alpha-D-glucosamine</name>
        <dbReference type="ChEBI" id="CHEBI:57705"/>
    </ligand>
</feature>
<feature type="binding site" evidence="1">
    <location>
        <position position="24"/>
    </location>
    <ligand>
        <name>UDP-N-acetyl-alpha-D-glucosamine</name>
        <dbReference type="ChEBI" id="CHEBI:57705"/>
    </ligand>
</feature>
<feature type="binding site" evidence="1">
    <location>
        <position position="75"/>
    </location>
    <ligand>
        <name>UDP-N-acetyl-alpha-D-glucosamine</name>
        <dbReference type="ChEBI" id="CHEBI:57705"/>
    </ligand>
</feature>
<feature type="binding site" evidence="1">
    <location>
        <begin position="80"/>
        <end position="81"/>
    </location>
    <ligand>
        <name>UDP-N-acetyl-alpha-D-glucosamine</name>
        <dbReference type="ChEBI" id="CHEBI:57705"/>
    </ligand>
</feature>
<feature type="binding site" evidence="1">
    <location>
        <begin position="102"/>
        <end position="104"/>
    </location>
    <ligand>
        <name>UDP-N-acetyl-alpha-D-glucosamine</name>
        <dbReference type="ChEBI" id="CHEBI:57705"/>
    </ligand>
</feature>
<feature type="binding site" evidence="1">
    <location>
        <position position="104"/>
    </location>
    <ligand>
        <name>Mg(2+)</name>
        <dbReference type="ChEBI" id="CHEBI:18420"/>
    </ligand>
</feature>
<feature type="binding site" evidence="1">
    <location>
        <position position="138"/>
    </location>
    <ligand>
        <name>UDP-N-acetyl-alpha-D-glucosamine</name>
        <dbReference type="ChEBI" id="CHEBI:57705"/>
    </ligand>
</feature>
<feature type="binding site" evidence="1">
    <location>
        <position position="153"/>
    </location>
    <ligand>
        <name>UDP-N-acetyl-alpha-D-glucosamine</name>
        <dbReference type="ChEBI" id="CHEBI:57705"/>
    </ligand>
</feature>
<feature type="binding site" evidence="1">
    <location>
        <position position="168"/>
    </location>
    <ligand>
        <name>UDP-N-acetyl-alpha-D-glucosamine</name>
        <dbReference type="ChEBI" id="CHEBI:57705"/>
    </ligand>
</feature>
<feature type="binding site" evidence="1">
    <location>
        <position position="226"/>
    </location>
    <ligand>
        <name>Mg(2+)</name>
        <dbReference type="ChEBI" id="CHEBI:18420"/>
    </ligand>
</feature>
<feature type="binding site" evidence="1">
    <location>
        <position position="226"/>
    </location>
    <ligand>
        <name>UDP-N-acetyl-alpha-D-glucosamine</name>
        <dbReference type="ChEBI" id="CHEBI:57705"/>
    </ligand>
</feature>
<feature type="binding site" evidence="1">
    <location>
        <position position="332"/>
    </location>
    <ligand>
        <name>UDP-N-acetyl-alpha-D-glucosamine</name>
        <dbReference type="ChEBI" id="CHEBI:57705"/>
    </ligand>
</feature>
<feature type="binding site" evidence="1">
    <location>
        <position position="350"/>
    </location>
    <ligand>
        <name>UDP-N-acetyl-alpha-D-glucosamine</name>
        <dbReference type="ChEBI" id="CHEBI:57705"/>
    </ligand>
</feature>
<feature type="binding site" evidence="1">
    <location>
        <position position="365"/>
    </location>
    <ligand>
        <name>UDP-N-acetyl-alpha-D-glucosamine</name>
        <dbReference type="ChEBI" id="CHEBI:57705"/>
    </ligand>
</feature>
<feature type="binding site" evidence="1">
    <location>
        <position position="376"/>
    </location>
    <ligand>
        <name>UDP-N-acetyl-alpha-D-glucosamine</name>
        <dbReference type="ChEBI" id="CHEBI:57705"/>
    </ligand>
</feature>
<feature type="binding site" evidence="1">
    <location>
        <position position="379"/>
    </location>
    <ligand>
        <name>acetyl-CoA</name>
        <dbReference type="ChEBI" id="CHEBI:57288"/>
    </ligand>
</feature>
<feature type="binding site" evidence="1">
    <location>
        <begin position="385"/>
        <end position="386"/>
    </location>
    <ligand>
        <name>acetyl-CoA</name>
        <dbReference type="ChEBI" id="CHEBI:57288"/>
    </ligand>
</feature>
<feature type="binding site" evidence="1">
    <location>
        <position position="422"/>
    </location>
    <ligand>
        <name>acetyl-CoA</name>
        <dbReference type="ChEBI" id="CHEBI:57288"/>
    </ligand>
</feature>
<feature type="binding site" evidence="1">
    <location>
        <position position="439"/>
    </location>
    <ligand>
        <name>acetyl-CoA</name>
        <dbReference type="ChEBI" id="CHEBI:57288"/>
    </ligand>
</feature>
<protein>
    <recommendedName>
        <fullName evidence="1">Bifunctional protein GlmU</fullName>
    </recommendedName>
    <domain>
        <recommendedName>
            <fullName evidence="1">UDP-N-acetylglucosamine pyrophosphorylase</fullName>
            <ecNumber evidence="1">2.7.7.23</ecNumber>
        </recommendedName>
        <alternativeName>
            <fullName evidence="1">N-acetylglucosamine-1-phosphate uridyltransferase</fullName>
        </alternativeName>
    </domain>
    <domain>
        <recommendedName>
            <fullName evidence="1">Glucosamine-1-phosphate N-acetyltransferase</fullName>
            <ecNumber evidence="1">2.3.1.157</ecNumber>
        </recommendedName>
    </domain>
</protein>
<evidence type="ECO:0000255" key="1">
    <source>
        <dbReference type="HAMAP-Rule" id="MF_01631"/>
    </source>
</evidence>
<sequence length="455" mass="49296">MNNTLTTIILAAGKGTRMQSAKPKVLQILADKPLLAHVLDTCQSISVDKTIVVYGFGGDQVQQAMTDYSLTWVEQTEQLGTGHAVKVALDELPSTGKSLILYGDVPLVSAETLSRLKQANVQGMSMLTLTVDNPFGLGRIKRDEQGNITAIVEQKDASEQEQAIREINSGIYCVDNALLHQYLPNLSNDNAQQEYYLTDIVKMAVADGIAIAAIEPDYEFEIEGVNNRQQLAQLERKWQAKLVEDLQVQGVQFADPNRVDIRGEVSVGQDVFVDINVVFKGKVSLGNNVTIEAGCMIKDSQIGDNVHIKPYCVFDDAQVAQGATIGPFAHLRPQTVLEKNTRLGNFVEIKKSRIGEGSKVNHLSYVGDAQIGAGVNFGAGAITCNYDGVNKHQTIVGDNAFIGTNTSLVAPVTIGQTATIGAGSVITKNVEDNALAIGRGRQVQKDNYQRPEKKK</sequence>
<gene>
    <name evidence="1" type="primary">glmU</name>
    <name type="ordered locus">PsycPRwf_2281</name>
</gene>
<organism>
    <name type="scientific">Psychrobacter sp. (strain PRwf-1)</name>
    <dbReference type="NCBI Taxonomy" id="349106"/>
    <lineage>
        <taxon>Bacteria</taxon>
        <taxon>Pseudomonadati</taxon>
        <taxon>Pseudomonadota</taxon>
        <taxon>Gammaproteobacteria</taxon>
        <taxon>Moraxellales</taxon>
        <taxon>Moraxellaceae</taxon>
        <taxon>Psychrobacter</taxon>
    </lineage>
</organism>
<accession>A5WHT0</accession>
<comment type="function">
    <text evidence="1">Catalyzes the last two sequential reactions in the de novo biosynthetic pathway for UDP-N-acetylglucosamine (UDP-GlcNAc). The C-terminal domain catalyzes the transfer of acetyl group from acetyl coenzyme A to glucosamine-1-phosphate (GlcN-1-P) to produce N-acetylglucosamine-1-phosphate (GlcNAc-1-P), which is converted into UDP-GlcNAc by the transfer of uridine 5-monophosphate (from uridine 5-triphosphate), a reaction catalyzed by the N-terminal domain.</text>
</comment>
<comment type="catalytic activity">
    <reaction evidence="1">
        <text>alpha-D-glucosamine 1-phosphate + acetyl-CoA = N-acetyl-alpha-D-glucosamine 1-phosphate + CoA + H(+)</text>
        <dbReference type="Rhea" id="RHEA:13725"/>
        <dbReference type="ChEBI" id="CHEBI:15378"/>
        <dbReference type="ChEBI" id="CHEBI:57287"/>
        <dbReference type="ChEBI" id="CHEBI:57288"/>
        <dbReference type="ChEBI" id="CHEBI:57776"/>
        <dbReference type="ChEBI" id="CHEBI:58516"/>
        <dbReference type="EC" id="2.3.1.157"/>
    </reaction>
</comment>
<comment type="catalytic activity">
    <reaction evidence="1">
        <text>N-acetyl-alpha-D-glucosamine 1-phosphate + UTP + H(+) = UDP-N-acetyl-alpha-D-glucosamine + diphosphate</text>
        <dbReference type="Rhea" id="RHEA:13509"/>
        <dbReference type="ChEBI" id="CHEBI:15378"/>
        <dbReference type="ChEBI" id="CHEBI:33019"/>
        <dbReference type="ChEBI" id="CHEBI:46398"/>
        <dbReference type="ChEBI" id="CHEBI:57705"/>
        <dbReference type="ChEBI" id="CHEBI:57776"/>
        <dbReference type="EC" id="2.7.7.23"/>
    </reaction>
</comment>
<comment type="cofactor">
    <cofactor evidence="1">
        <name>Mg(2+)</name>
        <dbReference type="ChEBI" id="CHEBI:18420"/>
    </cofactor>
    <text evidence="1">Binds 1 Mg(2+) ion per subunit.</text>
</comment>
<comment type="pathway">
    <text evidence="1">Nucleotide-sugar biosynthesis; UDP-N-acetyl-alpha-D-glucosamine biosynthesis; N-acetyl-alpha-D-glucosamine 1-phosphate from alpha-D-glucosamine 6-phosphate (route II): step 2/2.</text>
</comment>
<comment type="pathway">
    <text evidence="1">Nucleotide-sugar biosynthesis; UDP-N-acetyl-alpha-D-glucosamine biosynthesis; UDP-N-acetyl-alpha-D-glucosamine from N-acetyl-alpha-D-glucosamine 1-phosphate: step 1/1.</text>
</comment>
<comment type="pathway">
    <text evidence="1">Bacterial outer membrane biogenesis; LPS lipid A biosynthesis.</text>
</comment>
<comment type="subunit">
    <text evidence="1">Homotrimer.</text>
</comment>
<comment type="subcellular location">
    <subcellularLocation>
        <location evidence="1">Cytoplasm</location>
    </subcellularLocation>
</comment>
<comment type="similarity">
    <text evidence="1">In the N-terminal section; belongs to the N-acetylglucosamine-1-phosphate uridyltransferase family.</text>
</comment>
<comment type="similarity">
    <text evidence="1">In the C-terminal section; belongs to the transferase hexapeptide repeat family.</text>
</comment>